<accession>P84682</accession>
<name>SC39_TITOB</name>
<protein>
    <recommendedName>
        <fullName>Toxin To39</fullName>
    </recommendedName>
    <alternativeName>
        <fullName>Toxin Tc39</fullName>
    </alternativeName>
</protein>
<comment type="subcellular location">
    <subcellularLocation>
        <location evidence="1">Secreted</location>
    </subcellularLocation>
</comment>
<comment type="tissue specificity">
    <text evidence="1">Expressed by the venom gland.</text>
</comment>
<comment type="mass spectrometry" mass="2744.1" method="Electrospray" evidence="1"/>
<evidence type="ECO:0000269" key="1">
    <source>
    </source>
</evidence>
<evidence type="ECO:0000303" key="2">
    <source>
    </source>
</evidence>
<evidence type="ECO:0000305" key="3"/>
<reference evidence="3" key="1">
    <citation type="journal article" date="2004" name="J. Chromatogr. B">
        <title>Proteomics of the venom from the Amazonian scorpion Tityus cambridgei and the role of prolines on mass spectrometry analysis of toxins.</title>
        <authorList>
            <person name="Batista C.V.F."/>
            <person name="del Pozo L."/>
            <person name="Zamudio F.Z."/>
            <person name="Contreras S."/>
            <person name="Becerril B."/>
            <person name="Wanke E."/>
            <person name="Possani L.D."/>
        </authorList>
    </citation>
    <scope>PROTEIN SEQUENCE</scope>
    <scope>SUBCELLULAR LOCATION</scope>
    <scope>TISSUE SPECIFICITY</scope>
    <scope>MASS SPECTROMETRY</scope>
    <source>
        <tissue evidence="1">Venom</tissue>
    </source>
</reference>
<proteinExistence type="evidence at protein level"/>
<organism>
    <name type="scientific">Tityus obscurus</name>
    <name type="common">Amazonian scorpion</name>
    <name type="synonym">Tityus cambridgei</name>
    <dbReference type="NCBI Taxonomy" id="1221240"/>
    <lineage>
        <taxon>Eukaryota</taxon>
        <taxon>Metazoa</taxon>
        <taxon>Ecdysozoa</taxon>
        <taxon>Arthropoda</taxon>
        <taxon>Chelicerata</taxon>
        <taxon>Arachnida</taxon>
        <taxon>Scorpiones</taxon>
        <taxon>Buthida</taxon>
        <taxon>Buthoidea</taxon>
        <taxon>Buthidae</taxon>
        <taxon>Tityus</taxon>
    </lineage>
</organism>
<sequence length="10" mass="1141">DDDDLEGFSE</sequence>
<feature type="chain" id="PRO_0000066804" description="Toxin To39">
    <location>
        <begin position="1"/>
        <end position="10" status="greater than"/>
    </location>
</feature>
<feature type="non-terminal residue" evidence="2">
    <location>
        <position position="10"/>
    </location>
</feature>
<dbReference type="GO" id="GO:0005576">
    <property type="term" value="C:extracellular region"/>
    <property type="evidence" value="ECO:0007005"/>
    <property type="project" value="UniProtKB"/>
</dbReference>
<dbReference type="GO" id="GO:0090729">
    <property type="term" value="F:toxin activity"/>
    <property type="evidence" value="ECO:0007669"/>
    <property type="project" value="UniProtKB-KW"/>
</dbReference>
<keyword id="KW-0903">Direct protein sequencing</keyword>
<keyword id="KW-0964">Secreted</keyword>
<keyword id="KW-0800">Toxin</keyword>